<geneLocation type="chloroplast"/>
<dbReference type="EMBL" id="EF508371">
    <property type="protein sequence ID" value="ABO70825.1"/>
    <property type="molecule type" value="Genomic_DNA"/>
</dbReference>
<dbReference type="RefSeq" id="YP_001293536.1">
    <property type="nucleotide sequence ID" value="NC_009573.1"/>
</dbReference>
<dbReference type="SMR" id="A6MVV7"/>
<dbReference type="GeneID" id="5228644"/>
<dbReference type="GO" id="GO:0009535">
    <property type="term" value="C:chloroplast thylakoid membrane"/>
    <property type="evidence" value="ECO:0007669"/>
    <property type="project" value="UniProtKB-SubCell"/>
</dbReference>
<dbReference type="GO" id="GO:0009512">
    <property type="term" value="C:cytochrome b6f complex"/>
    <property type="evidence" value="ECO:0007669"/>
    <property type="project" value="InterPro"/>
</dbReference>
<dbReference type="GO" id="GO:0045158">
    <property type="term" value="F:electron transporter, transferring electrons within cytochrome b6/f complex of photosystem II activity"/>
    <property type="evidence" value="ECO:0007669"/>
    <property type="project" value="UniProtKB-UniRule"/>
</dbReference>
<dbReference type="GO" id="GO:0015979">
    <property type="term" value="P:photosynthesis"/>
    <property type="evidence" value="ECO:0007669"/>
    <property type="project" value="UniProtKB-KW"/>
</dbReference>
<dbReference type="HAMAP" id="MF_00433">
    <property type="entry name" value="Cytb6_f_PetL"/>
    <property type="match status" value="1"/>
</dbReference>
<dbReference type="InterPro" id="IPR007802">
    <property type="entry name" value="Cyt_b6/f_cplx_su6"/>
</dbReference>
<dbReference type="Pfam" id="PF05115">
    <property type="entry name" value="PetL"/>
    <property type="match status" value="1"/>
</dbReference>
<name>PETL_RHDSA</name>
<protein>
    <recommendedName>
        <fullName evidence="1">Cytochrome b6-f complex subunit 6</fullName>
    </recommendedName>
    <alternativeName>
        <fullName evidence="1">Cytochrome b6-f complex subunit PetL</fullName>
    </alternativeName>
    <alternativeName>
        <fullName evidence="1">Cytochrome b6-f complex subunit VI</fullName>
    </alternativeName>
</protein>
<reference key="1">
    <citation type="journal article" date="2007" name="Mol. Biol. Evol.">
        <title>Plastid genome sequence of the cryptophyte alga Rhodomonas salina CCMP1319: lateral transfer of putative DNA replication machinery and a test of chromist plastid phylogeny.</title>
        <authorList>
            <person name="Khan H."/>
            <person name="Parks N."/>
            <person name="Kozera C."/>
            <person name="Curtis B.A."/>
            <person name="Parsons B.J."/>
            <person name="Bowman S."/>
            <person name="Archibald J.M."/>
        </authorList>
    </citation>
    <scope>NUCLEOTIDE SEQUENCE [LARGE SCALE GENOMIC DNA]</scope>
    <source>
        <strain>CCMP1319 / NEPCC76 / CS-174</strain>
    </source>
</reference>
<proteinExistence type="inferred from homology"/>
<keyword id="KW-0150">Chloroplast</keyword>
<keyword id="KW-0249">Electron transport</keyword>
<keyword id="KW-0472">Membrane</keyword>
<keyword id="KW-0602">Photosynthesis</keyword>
<keyword id="KW-0934">Plastid</keyword>
<keyword id="KW-0793">Thylakoid</keyword>
<keyword id="KW-0812">Transmembrane</keyword>
<keyword id="KW-1133">Transmembrane helix</keyword>
<keyword id="KW-0813">Transport</keyword>
<gene>
    <name evidence="1" type="primary">petL</name>
</gene>
<comment type="function">
    <text evidence="1">Component of the cytochrome b6-f complex, which mediates electron transfer between photosystem II (PSII) and photosystem I (PSI), cyclic electron flow around PSI, and state transitions. PetL is important for photoautotrophic growth as well as for electron transfer efficiency and stability of the cytochrome b6-f complex.</text>
</comment>
<comment type="subunit">
    <text evidence="1">The 4 large subunits of the cytochrome b6-f complex are cytochrome b6, subunit IV (17 kDa polypeptide, PetD), cytochrome f and the Rieske protein, while the 4 small subunits are PetG, PetL, PetM and PetN. The complex functions as a dimer.</text>
</comment>
<comment type="subcellular location">
    <subcellularLocation>
        <location evidence="1">Plastid</location>
        <location evidence="1">Chloroplast thylakoid membrane</location>
        <topology evidence="1">Single-pass membrane protein</topology>
    </subcellularLocation>
</comment>
<comment type="similarity">
    <text evidence="1">Belongs to the PetL family.</text>
</comment>
<sequence>MSILIGYIILLACAFGLAAGLFFGLSLIKLI</sequence>
<feature type="chain" id="PRO_0000300153" description="Cytochrome b6-f complex subunit 6">
    <location>
        <begin position="1"/>
        <end position="31"/>
    </location>
</feature>
<feature type="transmembrane region" description="Helical" evidence="1">
    <location>
        <begin position="3"/>
        <end position="23"/>
    </location>
</feature>
<evidence type="ECO:0000255" key="1">
    <source>
        <dbReference type="HAMAP-Rule" id="MF_00433"/>
    </source>
</evidence>
<organism>
    <name type="scientific">Rhodomonas salina</name>
    <name type="common">Cryptomonas salina</name>
    <dbReference type="NCBI Taxonomy" id="52970"/>
    <lineage>
        <taxon>Eukaryota</taxon>
        <taxon>Cryptophyceae</taxon>
        <taxon>Pyrenomonadales</taxon>
        <taxon>Pyrenomonadaceae</taxon>
        <taxon>Rhodomonas</taxon>
    </lineage>
</organism>
<accession>A6MVV7</accession>